<sequence length="251" mass="26188">MRRKIVAGNWKLHGSRAFATELVAKVAAHMPLEGVEVVILPPLPYLGDLIEDFEAHHLSFGAQDVSSNEKGAYTGEVSASMLVDVGAGYGLVGHSERRQYHQESSELVARKFAAALHAGLIPVLCVGESLEQREAGQTEAILRAQLDPVLALVGSAGFAGAVLAYEPIWAIGTGRTATPEQAQAVHAFLRGEVAKADARIADSLPILYGGSVKPDNAGELFAQPDVDGGLVGGASLVAEDFLAIARAAAAC</sequence>
<reference key="1">
    <citation type="journal article" date="2002" name="Nature">
        <title>Comparison of the genomes of two Xanthomonas pathogens with differing host specificities.</title>
        <authorList>
            <person name="da Silva A.C.R."/>
            <person name="Ferro J.A."/>
            <person name="Reinach F.C."/>
            <person name="Farah C.S."/>
            <person name="Furlan L.R."/>
            <person name="Quaggio R.B."/>
            <person name="Monteiro-Vitorello C.B."/>
            <person name="Van Sluys M.A."/>
            <person name="Almeida N.F. Jr."/>
            <person name="Alves L.M.C."/>
            <person name="do Amaral A.M."/>
            <person name="Bertolini M.C."/>
            <person name="Camargo L.E.A."/>
            <person name="Camarotte G."/>
            <person name="Cannavan F."/>
            <person name="Cardozo J."/>
            <person name="Chambergo F."/>
            <person name="Ciapina L.P."/>
            <person name="Cicarelli R.M.B."/>
            <person name="Coutinho L.L."/>
            <person name="Cursino-Santos J.R."/>
            <person name="El-Dorry H."/>
            <person name="Faria J.B."/>
            <person name="Ferreira A.J.S."/>
            <person name="Ferreira R.C.C."/>
            <person name="Ferro M.I.T."/>
            <person name="Formighieri E.F."/>
            <person name="Franco M.C."/>
            <person name="Greggio C.C."/>
            <person name="Gruber A."/>
            <person name="Katsuyama A.M."/>
            <person name="Kishi L.T."/>
            <person name="Leite R.P."/>
            <person name="Lemos E.G.M."/>
            <person name="Lemos M.V.F."/>
            <person name="Locali E.C."/>
            <person name="Machado M.A."/>
            <person name="Madeira A.M.B.N."/>
            <person name="Martinez-Rossi N.M."/>
            <person name="Martins E.C."/>
            <person name="Meidanis J."/>
            <person name="Menck C.F.M."/>
            <person name="Miyaki C.Y."/>
            <person name="Moon D.H."/>
            <person name="Moreira L.M."/>
            <person name="Novo M.T.M."/>
            <person name="Okura V.K."/>
            <person name="Oliveira M.C."/>
            <person name="Oliveira V.R."/>
            <person name="Pereira H.A."/>
            <person name="Rossi A."/>
            <person name="Sena J.A.D."/>
            <person name="Silva C."/>
            <person name="de Souza R.F."/>
            <person name="Spinola L.A.F."/>
            <person name="Takita M.A."/>
            <person name="Tamura R.E."/>
            <person name="Teixeira E.C."/>
            <person name="Tezza R.I.D."/>
            <person name="Trindade dos Santos M."/>
            <person name="Truffi D."/>
            <person name="Tsai S.M."/>
            <person name="White F.F."/>
            <person name="Setubal J.C."/>
            <person name="Kitajima J.P."/>
        </authorList>
    </citation>
    <scope>NUCLEOTIDE SEQUENCE [LARGE SCALE GENOMIC DNA]</scope>
    <source>
        <strain>306</strain>
    </source>
</reference>
<proteinExistence type="inferred from homology"/>
<accession>Q8PJ38</accession>
<gene>
    <name evidence="1" type="primary">tpiA</name>
    <name type="ordered locus">XAC2707</name>
</gene>
<protein>
    <recommendedName>
        <fullName evidence="1">Triosephosphate isomerase</fullName>
        <shortName evidence="1">TIM</shortName>
        <shortName evidence="1">TPI</shortName>
        <ecNumber evidence="1">5.3.1.1</ecNumber>
    </recommendedName>
    <alternativeName>
        <fullName evidence="1">Triose-phosphate isomerase</fullName>
    </alternativeName>
</protein>
<name>TPIS_XANAC</name>
<keyword id="KW-0963">Cytoplasm</keyword>
<keyword id="KW-0312">Gluconeogenesis</keyword>
<keyword id="KW-0324">Glycolysis</keyword>
<keyword id="KW-0413">Isomerase</keyword>
<evidence type="ECO:0000255" key="1">
    <source>
        <dbReference type="HAMAP-Rule" id="MF_00147"/>
    </source>
</evidence>
<comment type="function">
    <text evidence="1">Involved in the gluconeogenesis. Catalyzes stereospecifically the conversion of dihydroxyacetone phosphate (DHAP) to D-glyceraldehyde-3-phosphate (G3P).</text>
</comment>
<comment type="catalytic activity">
    <reaction evidence="1">
        <text>D-glyceraldehyde 3-phosphate = dihydroxyacetone phosphate</text>
        <dbReference type="Rhea" id="RHEA:18585"/>
        <dbReference type="ChEBI" id="CHEBI:57642"/>
        <dbReference type="ChEBI" id="CHEBI:59776"/>
        <dbReference type="EC" id="5.3.1.1"/>
    </reaction>
</comment>
<comment type="pathway">
    <text evidence="1">Carbohydrate biosynthesis; gluconeogenesis.</text>
</comment>
<comment type="pathway">
    <text evidence="1">Carbohydrate degradation; glycolysis; D-glyceraldehyde 3-phosphate from glycerone phosphate: step 1/1.</text>
</comment>
<comment type="subunit">
    <text evidence="1">Homodimer.</text>
</comment>
<comment type="subcellular location">
    <subcellularLocation>
        <location evidence="1">Cytoplasm</location>
    </subcellularLocation>
</comment>
<comment type="similarity">
    <text evidence="1">Belongs to the triosephosphate isomerase family.</text>
</comment>
<feature type="chain" id="PRO_0000090321" description="Triosephosphate isomerase">
    <location>
        <begin position="1"/>
        <end position="251"/>
    </location>
</feature>
<feature type="active site" description="Electrophile" evidence="1">
    <location>
        <position position="94"/>
    </location>
</feature>
<feature type="active site" description="Proton acceptor" evidence="1">
    <location>
        <position position="166"/>
    </location>
</feature>
<feature type="binding site" evidence="1">
    <location>
        <begin position="9"/>
        <end position="11"/>
    </location>
    <ligand>
        <name>substrate</name>
    </ligand>
</feature>
<feature type="binding site" evidence="1">
    <location>
        <position position="172"/>
    </location>
    <ligand>
        <name>substrate</name>
    </ligand>
</feature>
<feature type="binding site" evidence="1">
    <location>
        <position position="211"/>
    </location>
    <ligand>
        <name>substrate</name>
    </ligand>
</feature>
<feature type="binding site" evidence="1">
    <location>
        <begin position="232"/>
        <end position="233"/>
    </location>
    <ligand>
        <name>substrate</name>
    </ligand>
</feature>
<organism>
    <name type="scientific">Xanthomonas axonopodis pv. citri (strain 306)</name>
    <dbReference type="NCBI Taxonomy" id="190486"/>
    <lineage>
        <taxon>Bacteria</taxon>
        <taxon>Pseudomonadati</taxon>
        <taxon>Pseudomonadota</taxon>
        <taxon>Gammaproteobacteria</taxon>
        <taxon>Lysobacterales</taxon>
        <taxon>Lysobacteraceae</taxon>
        <taxon>Xanthomonas</taxon>
    </lineage>
</organism>
<dbReference type="EC" id="5.3.1.1" evidence="1"/>
<dbReference type="EMBL" id="AE008923">
    <property type="protein sequence ID" value="AAM37552.1"/>
    <property type="molecule type" value="Genomic_DNA"/>
</dbReference>
<dbReference type="RefSeq" id="WP_003485534.1">
    <property type="nucleotide sequence ID" value="NC_003919.1"/>
</dbReference>
<dbReference type="SMR" id="Q8PJ38"/>
<dbReference type="GeneID" id="66911796"/>
<dbReference type="KEGG" id="xac:XAC2707"/>
<dbReference type="eggNOG" id="COG0149">
    <property type="taxonomic scope" value="Bacteria"/>
</dbReference>
<dbReference type="HOGENOM" id="CLU_024251_2_1_6"/>
<dbReference type="UniPathway" id="UPA00109">
    <property type="reaction ID" value="UER00189"/>
</dbReference>
<dbReference type="UniPathway" id="UPA00138"/>
<dbReference type="Proteomes" id="UP000000576">
    <property type="component" value="Chromosome"/>
</dbReference>
<dbReference type="GO" id="GO:0005829">
    <property type="term" value="C:cytosol"/>
    <property type="evidence" value="ECO:0007669"/>
    <property type="project" value="TreeGrafter"/>
</dbReference>
<dbReference type="GO" id="GO:0004807">
    <property type="term" value="F:triose-phosphate isomerase activity"/>
    <property type="evidence" value="ECO:0007669"/>
    <property type="project" value="UniProtKB-UniRule"/>
</dbReference>
<dbReference type="GO" id="GO:0006094">
    <property type="term" value="P:gluconeogenesis"/>
    <property type="evidence" value="ECO:0007669"/>
    <property type="project" value="UniProtKB-UniRule"/>
</dbReference>
<dbReference type="GO" id="GO:0046166">
    <property type="term" value="P:glyceraldehyde-3-phosphate biosynthetic process"/>
    <property type="evidence" value="ECO:0007669"/>
    <property type="project" value="TreeGrafter"/>
</dbReference>
<dbReference type="GO" id="GO:0019563">
    <property type="term" value="P:glycerol catabolic process"/>
    <property type="evidence" value="ECO:0007669"/>
    <property type="project" value="TreeGrafter"/>
</dbReference>
<dbReference type="GO" id="GO:0006096">
    <property type="term" value="P:glycolytic process"/>
    <property type="evidence" value="ECO:0007669"/>
    <property type="project" value="UniProtKB-UniRule"/>
</dbReference>
<dbReference type="CDD" id="cd00311">
    <property type="entry name" value="TIM"/>
    <property type="match status" value="1"/>
</dbReference>
<dbReference type="FunFam" id="3.20.20.70:FF:000020">
    <property type="entry name" value="Triosephosphate isomerase"/>
    <property type="match status" value="1"/>
</dbReference>
<dbReference type="Gene3D" id="3.20.20.70">
    <property type="entry name" value="Aldolase class I"/>
    <property type="match status" value="1"/>
</dbReference>
<dbReference type="HAMAP" id="MF_00147_B">
    <property type="entry name" value="TIM_B"/>
    <property type="match status" value="1"/>
</dbReference>
<dbReference type="InterPro" id="IPR013785">
    <property type="entry name" value="Aldolase_TIM"/>
</dbReference>
<dbReference type="InterPro" id="IPR035990">
    <property type="entry name" value="TIM_sf"/>
</dbReference>
<dbReference type="InterPro" id="IPR022896">
    <property type="entry name" value="TrioseP_Isoase_bac/euk"/>
</dbReference>
<dbReference type="InterPro" id="IPR000652">
    <property type="entry name" value="Triosephosphate_isomerase"/>
</dbReference>
<dbReference type="InterPro" id="IPR020861">
    <property type="entry name" value="Triosephosphate_isomerase_AS"/>
</dbReference>
<dbReference type="NCBIfam" id="TIGR00419">
    <property type="entry name" value="tim"/>
    <property type="match status" value="1"/>
</dbReference>
<dbReference type="PANTHER" id="PTHR21139">
    <property type="entry name" value="TRIOSEPHOSPHATE ISOMERASE"/>
    <property type="match status" value="1"/>
</dbReference>
<dbReference type="PANTHER" id="PTHR21139:SF42">
    <property type="entry name" value="TRIOSEPHOSPHATE ISOMERASE"/>
    <property type="match status" value="1"/>
</dbReference>
<dbReference type="Pfam" id="PF00121">
    <property type="entry name" value="TIM"/>
    <property type="match status" value="1"/>
</dbReference>
<dbReference type="SUPFAM" id="SSF51351">
    <property type="entry name" value="Triosephosphate isomerase (TIM)"/>
    <property type="match status" value="1"/>
</dbReference>
<dbReference type="PROSITE" id="PS00171">
    <property type="entry name" value="TIM_1"/>
    <property type="match status" value="1"/>
</dbReference>
<dbReference type="PROSITE" id="PS51440">
    <property type="entry name" value="TIM_2"/>
    <property type="match status" value="1"/>
</dbReference>